<reference key="1">
    <citation type="journal article" date="2000" name="Nucleic Acids Res.">
        <title>Genome sequences of Chlamydia trachomatis MoPn and Chlamydia pneumoniae AR39.</title>
        <authorList>
            <person name="Read T.D."/>
            <person name="Brunham R.C."/>
            <person name="Shen C."/>
            <person name="Gill S.R."/>
            <person name="Heidelberg J.F."/>
            <person name="White O."/>
            <person name="Hickey E.K."/>
            <person name="Peterson J.D."/>
            <person name="Utterback T.R."/>
            <person name="Berry K.J."/>
            <person name="Bass S."/>
            <person name="Linher K.D."/>
            <person name="Weidman J.F."/>
            <person name="Khouri H.M."/>
            <person name="Craven B."/>
            <person name="Bowman C."/>
            <person name="Dodson R.J."/>
            <person name="Gwinn M.L."/>
            <person name="Nelson W.C."/>
            <person name="DeBoy R.T."/>
            <person name="Kolonay J.F."/>
            <person name="McClarty G."/>
            <person name="Salzberg S.L."/>
            <person name="Eisen J.A."/>
            <person name="Fraser C.M."/>
        </authorList>
    </citation>
    <scope>NUCLEOTIDE SEQUENCE [LARGE SCALE GENOMIC DNA]</scope>
    <source>
        <strain>MoPn / Nigg</strain>
    </source>
</reference>
<evidence type="ECO:0000255" key="1">
    <source>
        <dbReference type="HAMAP-Rule" id="MF_00022"/>
    </source>
</evidence>
<feature type="chain" id="PRO_0000119538" description="Glutamate--tRNA ligase">
    <location>
        <begin position="1"/>
        <end position="506"/>
    </location>
</feature>
<feature type="short sequence motif" description="'HIGH' region" evidence="1">
    <location>
        <begin position="12"/>
        <end position="22"/>
    </location>
</feature>
<feature type="short sequence motif" description="'KMSKS' region" evidence="1">
    <location>
        <begin position="253"/>
        <end position="257"/>
    </location>
</feature>
<feature type="binding site" evidence="1">
    <location>
        <position position="256"/>
    </location>
    <ligand>
        <name>ATP</name>
        <dbReference type="ChEBI" id="CHEBI:30616"/>
    </ligand>
</feature>
<dbReference type="EC" id="6.1.1.17" evidence="1"/>
<dbReference type="EMBL" id="AE002160">
    <property type="protein sequence ID" value="AAF39540.1"/>
    <property type="molecule type" value="Genomic_DNA"/>
</dbReference>
<dbReference type="PIR" id="F81671">
    <property type="entry name" value="F81671"/>
</dbReference>
<dbReference type="RefSeq" id="WP_010231365.1">
    <property type="nucleotide sequence ID" value="NZ_CP063055.1"/>
</dbReference>
<dbReference type="SMR" id="Q9PJU7"/>
<dbReference type="GeneID" id="1246093"/>
<dbReference type="KEGG" id="cmu:TC_0730"/>
<dbReference type="eggNOG" id="COG0008">
    <property type="taxonomic scope" value="Bacteria"/>
</dbReference>
<dbReference type="HOGENOM" id="CLU_015768_6_3_0"/>
<dbReference type="OrthoDB" id="9807503at2"/>
<dbReference type="Proteomes" id="UP000000800">
    <property type="component" value="Chromosome"/>
</dbReference>
<dbReference type="GO" id="GO:0005829">
    <property type="term" value="C:cytosol"/>
    <property type="evidence" value="ECO:0007669"/>
    <property type="project" value="TreeGrafter"/>
</dbReference>
<dbReference type="GO" id="GO:0005524">
    <property type="term" value="F:ATP binding"/>
    <property type="evidence" value="ECO:0007669"/>
    <property type="project" value="UniProtKB-UniRule"/>
</dbReference>
<dbReference type="GO" id="GO:0004818">
    <property type="term" value="F:glutamate-tRNA ligase activity"/>
    <property type="evidence" value="ECO:0007669"/>
    <property type="project" value="UniProtKB-UniRule"/>
</dbReference>
<dbReference type="GO" id="GO:0000049">
    <property type="term" value="F:tRNA binding"/>
    <property type="evidence" value="ECO:0007669"/>
    <property type="project" value="InterPro"/>
</dbReference>
<dbReference type="GO" id="GO:0008270">
    <property type="term" value="F:zinc ion binding"/>
    <property type="evidence" value="ECO:0007669"/>
    <property type="project" value="InterPro"/>
</dbReference>
<dbReference type="GO" id="GO:0006424">
    <property type="term" value="P:glutamyl-tRNA aminoacylation"/>
    <property type="evidence" value="ECO:0007669"/>
    <property type="project" value="UniProtKB-UniRule"/>
</dbReference>
<dbReference type="CDD" id="cd00808">
    <property type="entry name" value="GluRS_core"/>
    <property type="match status" value="1"/>
</dbReference>
<dbReference type="FunFam" id="3.40.50.620:FF:000329">
    <property type="entry name" value="Glutamate--tRNA ligase"/>
    <property type="match status" value="1"/>
</dbReference>
<dbReference type="Gene3D" id="1.10.10.350">
    <property type="match status" value="1"/>
</dbReference>
<dbReference type="Gene3D" id="3.40.50.620">
    <property type="entry name" value="HUPs"/>
    <property type="match status" value="1"/>
</dbReference>
<dbReference type="HAMAP" id="MF_00022">
    <property type="entry name" value="Glu_tRNA_synth_type1"/>
    <property type="match status" value="1"/>
</dbReference>
<dbReference type="InterPro" id="IPR045462">
    <property type="entry name" value="aa-tRNA-synth_I_cd-bd"/>
</dbReference>
<dbReference type="InterPro" id="IPR020751">
    <property type="entry name" value="aa-tRNA-synth_I_codon-bd_sub2"/>
</dbReference>
<dbReference type="InterPro" id="IPR001412">
    <property type="entry name" value="aa-tRNA-synth_I_CS"/>
</dbReference>
<dbReference type="InterPro" id="IPR008925">
    <property type="entry name" value="aa_tRNA-synth_I_cd-bd_sf"/>
</dbReference>
<dbReference type="InterPro" id="IPR004527">
    <property type="entry name" value="Glu-tRNA-ligase_bac/mito"/>
</dbReference>
<dbReference type="InterPro" id="IPR000924">
    <property type="entry name" value="Glu/Gln-tRNA-synth"/>
</dbReference>
<dbReference type="InterPro" id="IPR020058">
    <property type="entry name" value="Glu/Gln-tRNA-synth_Ib_cat-dom"/>
</dbReference>
<dbReference type="InterPro" id="IPR049940">
    <property type="entry name" value="GluQ/Sye"/>
</dbReference>
<dbReference type="InterPro" id="IPR033910">
    <property type="entry name" value="GluRS_core"/>
</dbReference>
<dbReference type="InterPro" id="IPR014729">
    <property type="entry name" value="Rossmann-like_a/b/a_fold"/>
</dbReference>
<dbReference type="NCBIfam" id="TIGR00464">
    <property type="entry name" value="gltX_bact"/>
    <property type="match status" value="1"/>
</dbReference>
<dbReference type="PANTHER" id="PTHR43311">
    <property type="entry name" value="GLUTAMATE--TRNA LIGASE"/>
    <property type="match status" value="1"/>
</dbReference>
<dbReference type="PANTHER" id="PTHR43311:SF2">
    <property type="entry name" value="GLUTAMATE--TRNA LIGASE, MITOCHONDRIAL-RELATED"/>
    <property type="match status" value="1"/>
</dbReference>
<dbReference type="Pfam" id="PF19269">
    <property type="entry name" value="Anticodon_2"/>
    <property type="match status" value="1"/>
</dbReference>
<dbReference type="Pfam" id="PF00749">
    <property type="entry name" value="tRNA-synt_1c"/>
    <property type="match status" value="1"/>
</dbReference>
<dbReference type="PRINTS" id="PR00987">
    <property type="entry name" value="TRNASYNTHGLU"/>
</dbReference>
<dbReference type="SUPFAM" id="SSF48163">
    <property type="entry name" value="An anticodon-binding domain of class I aminoacyl-tRNA synthetases"/>
    <property type="match status" value="1"/>
</dbReference>
<dbReference type="SUPFAM" id="SSF52374">
    <property type="entry name" value="Nucleotidylyl transferase"/>
    <property type="match status" value="1"/>
</dbReference>
<dbReference type="PROSITE" id="PS00178">
    <property type="entry name" value="AA_TRNA_LIGASE_I"/>
    <property type="match status" value="1"/>
</dbReference>
<accession>Q9PJU7</accession>
<organism>
    <name type="scientific">Chlamydia muridarum (strain MoPn / Nigg)</name>
    <dbReference type="NCBI Taxonomy" id="243161"/>
    <lineage>
        <taxon>Bacteria</taxon>
        <taxon>Pseudomonadati</taxon>
        <taxon>Chlamydiota</taxon>
        <taxon>Chlamydiia</taxon>
        <taxon>Chlamydiales</taxon>
        <taxon>Chlamydiaceae</taxon>
        <taxon>Chlamydia/Chlamydophila group</taxon>
        <taxon>Chlamydia</taxon>
    </lineage>
</organism>
<keyword id="KW-0030">Aminoacyl-tRNA synthetase</keyword>
<keyword id="KW-0067">ATP-binding</keyword>
<keyword id="KW-0963">Cytoplasm</keyword>
<keyword id="KW-0436">Ligase</keyword>
<keyword id="KW-0547">Nucleotide-binding</keyword>
<keyword id="KW-0648">Protein biosynthesis</keyword>
<sequence>MTFQNVRVRVAPSPTGDPHVGTAYMALFNEVFARKFNGKMILRIEDTDQTRSRDDYEKNIFSALKWCGIRWDEGPDIGGPYGPYRQSERTEIYKKYAEILLQTDYAYKCFATPQELQEMRAVASTLGYRGGYDRRYRYLSAEEVRQREEQGQPYTIRLKVPLTGESVFEDQCKGRVVFPWADVDDQVLVKSDGFPTYHFANVVDDHLMGITHVLRGEEWLSSTPKHLLLYEAFGWEPPQFFHMPLLLNPDGSKLSKRKNPTSIFYYRDAGYKKEAFMNFLTLMGYSMEGDEEIYSMQRLIEAFDPKRIGRSGAVFDIRKLDWMNKHYLNHEGSPESLLKELKDWLWNDEFLLKILPLCQTRITTLADFIRLTSFFFMAIPEYSKEDLLPSSLGHQQAAVMLYSLVKYLEKKDLWEKDFFYQGSKWLAEAFQVHHKKAVIPLLYVTITGEKQGLPLFDSMELLGKARTRARLTHAQNLLGGVPKKLQQQIDKALQDQPLEEIRFLDF</sequence>
<name>SYE_CHLMU</name>
<proteinExistence type="inferred from homology"/>
<comment type="function">
    <text evidence="1">Catalyzes the attachment of glutamate to tRNA(Glu) in a two-step reaction: glutamate is first activated by ATP to form Glu-AMP and then transferred to the acceptor end of tRNA(Glu).</text>
</comment>
<comment type="catalytic activity">
    <reaction evidence="1">
        <text>tRNA(Glu) + L-glutamate + ATP = L-glutamyl-tRNA(Glu) + AMP + diphosphate</text>
        <dbReference type="Rhea" id="RHEA:23540"/>
        <dbReference type="Rhea" id="RHEA-COMP:9663"/>
        <dbReference type="Rhea" id="RHEA-COMP:9680"/>
        <dbReference type="ChEBI" id="CHEBI:29985"/>
        <dbReference type="ChEBI" id="CHEBI:30616"/>
        <dbReference type="ChEBI" id="CHEBI:33019"/>
        <dbReference type="ChEBI" id="CHEBI:78442"/>
        <dbReference type="ChEBI" id="CHEBI:78520"/>
        <dbReference type="ChEBI" id="CHEBI:456215"/>
        <dbReference type="EC" id="6.1.1.17"/>
    </reaction>
</comment>
<comment type="subunit">
    <text evidence="1">Monomer.</text>
</comment>
<comment type="subcellular location">
    <subcellularLocation>
        <location evidence="1">Cytoplasm</location>
    </subcellularLocation>
</comment>
<comment type="similarity">
    <text evidence="1">Belongs to the class-I aminoacyl-tRNA synthetase family. Glutamate--tRNA ligase type 1 subfamily.</text>
</comment>
<gene>
    <name evidence="1" type="primary">gltX</name>
    <name type="ordered locus">TC_0730</name>
</gene>
<protein>
    <recommendedName>
        <fullName evidence="1">Glutamate--tRNA ligase</fullName>
        <ecNumber evidence="1">6.1.1.17</ecNumber>
    </recommendedName>
    <alternativeName>
        <fullName evidence="1">Glutamyl-tRNA synthetase</fullName>
        <shortName evidence="1">GluRS</shortName>
    </alternativeName>
</protein>